<gene>
    <name type="ordered locus">MIMI_L52</name>
</gene>
<protein>
    <recommendedName>
        <fullName>Uncharacterized protein L52</fullName>
    </recommendedName>
</protein>
<accession>Q5UPD0</accession>
<proteinExistence type="predicted"/>
<organism>
    <name type="scientific">Acanthamoeba polyphaga mimivirus</name>
    <name type="common">APMV</name>
    <dbReference type="NCBI Taxonomy" id="212035"/>
    <lineage>
        <taxon>Viruses</taxon>
        <taxon>Varidnaviria</taxon>
        <taxon>Bamfordvirae</taxon>
        <taxon>Nucleocytoviricota</taxon>
        <taxon>Megaviricetes</taxon>
        <taxon>Imitervirales</taxon>
        <taxon>Mimiviridae</taxon>
        <taxon>Megamimivirinae</taxon>
        <taxon>Mimivirus</taxon>
        <taxon>Mimivirus bradfordmassiliense</taxon>
    </lineage>
</organism>
<sequence>MDCNIVLLLRNNTMENNTKNYLEFIIEKNKVNFFKQMIEIVCVEQSCKIFFDSSNISNNGACIITFIPCSSSGELNNNMMFRLKKLGYFFCKVPKTTIIVDSELLSKCFRRLSTNDDAIVYIKDTGQLFVYNLDNNNNQY</sequence>
<feature type="chain" id="PRO_0000071193" description="Uncharacterized protein L52">
    <location>
        <begin position="1"/>
        <end position="140"/>
    </location>
</feature>
<organismHost>
    <name type="scientific">Acanthamoeba polyphaga</name>
    <name type="common">Amoeba</name>
    <dbReference type="NCBI Taxonomy" id="5757"/>
</organismHost>
<keyword id="KW-1185">Reference proteome</keyword>
<reference key="1">
    <citation type="journal article" date="2004" name="Science">
        <title>The 1.2-megabase genome sequence of Mimivirus.</title>
        <authorList>
            <person name="Raoult D."/>
            <person name="Audic S."/>
            <person name="Robert C."/>
            <person name="Abergel C."/>
            <person name="Renesto P."/>
            <person name="Ogata H."/>
            <person name="La Scola B."/>
            <person name="Susan M."/>
            <person name="Claverie J.-M."/>
        </authorList>
    </citation>
    <scope>NUCLEOTIDE SEQUENCE [LARGE SCALE GENOMIC DNA]</scope>
    <source>
        <strain>Rowbotham-Bradford</strain>
    </source>
</reference>
<dbReference type="EMBL" id="AY653733">
    <property type="protein sequence ID" value="AAV50327.1"/>
    <property type="molecule type" value="Genomic_DNA"/>
</dbReference>
<dbReference type="SMR" id="Q5UPD0"/>
<dbReference type="KEGG" id="vg:9924640"/>
<dbReference type="OrthoDB" id="36971at10239"/>
<dbReference type="Proteomes" id="UP000001134">
    <property type="component" value="Genome"/>
</dbReference>
<name>YL052_MIMIV</name>